<keyword id="KW-0001">2Fe-2S</keyword>
<keyword id="KW-0004">4Fe-4S</keyword>
<keyword id="KW-0053">Apoptosis</keyword>
<keyword id="KW-0963">Cytoplasm</keyword>
<keyword id="KW-0408">Iron</keyword>
<keyword id="KW-0411">Iron-sulfur</keyword>
<keyword id="KW-0479">Metal-binding</keyword>
<keyword id="KW-0496">Mitochondrion</keyword>
<keyword id="KW-0539">Nucleus</keyword>
<keyword id="KW-1185">Reference proteome</keyword>
<comment type="function">
    <text evidence="1">Component of the cytosolic iron-sulfur (Fe-S) protein assembly (CIA) machinery required for the maturation of extramitochondrial Fe-S proteins. Part of an electron transfer chain functioning in an early step of cytosolic Fe-S biogenesis, facilitating the de novo assembly of a [4Fe-4S] cluster on the scaffold complex NUBP1-NUBP2. Electrons are transferred to CIAPIN1 from NADPH via the FAD- and FMN-containing protein NDOR1. NDOR1-CIAPIN1 are also required for the assembly of the diferric tyrosyl radical cofactor of ribonucleotide reductase (RNR), probably by providing electrons for reduction during radical cofactor maturation in the catalytic small subunit. Has anti-apoptotic effects in the cell. Involved in negative control of cell death upon cytokine withdrawal. Promotes development of hematopoietic cells.</text>
</comment>
<comment type="cofactor">
    <cofactor evidence="1">
        <name>[2Fe-2S] cluster</name>
        <dbReference type="ChEBI" id="CHEBI:190135"/>
    </cofactor>
</comment>
<comment type="cofactor">
    <cofactor evidence="1">
        <name>[4Fe-4S] cluster</name>
        <dbReference type="ChEBI" id="CHEBI:49883"/>
    </cofactor>
</comment>
<comment type="subunit">
    <text evidence="1">Monomer. Interacts with ndor1. Interacts with chchd4.</text>
</comment>
<comment type="subcellular location">
    <subcellularLocation>
        <location evidence="1">Cytoplasm</location>
    </subcellularLocation>
    <subcellularLocation>
        <location evidence="1">Nucleus</location>
    </subcellularLocation>
    <subcellularLocation>
        <location evidence="1">Mitochondrion intermembrane space</location>
    </subcellularLocation>
</comment>
<comment type="domain">
    <text evidence="1">The twin Cx2C motifs are involved in the recognition by the mitochondrial CHCHD4/MIA40-GFER/ERV1 disulfide relay system. The formation of 2 disulfide bonds in the Cx2C motifs through dithiol/disulfide exchange reactions effectively traps the protein in the mitochondrial intermembrane space.</text>
</comment>
<comment type="domain">
    <text evidence="1">The C-terminal domain binds 2 Fe-S clusters but is otherwise mostly in an intrinsically disordered conformation.</text>
</comment>
<comment type="domain">
    <text evidence="1">The N-terminal domain has structural similarity with S-adenosyl-L-methionine-dependent methyltransferases, but does not bind S-adenosyl-L-methionine. It is required for correct assembly of the 2 Fe-S clusters.</text>
</comment>
<comment type="similarity">
    <text evidence="1">Belongs to the anamorsin family.</text>
</comment>
<protein>
    <recommendedName>
        <fullName evidence="1">Anamorsin</fullName>
    </recommendedName>
    <alternativeName>
        <fullName evidence="1">Cytokine-induced apoptosis inhibitor 1</fullName>
    </alternativeName>
    <alternativeName>
        <fullName evidence="1">Fe-S cluster assembly protein DRE2 homolog</fullName>
    </alternativeName>
</protein>
<gene>
    <name evidence="1" type="primary">ciapin1</name>
    <name type="ORF">si:ch211-51l3.3-001</name>
</gene>
<sequence length="311" mass="32902">MADLGLQKGKRVLLIWTQPSSSSALKQFAESIAAVVGDQSLVSLENSERLLLSSHNASSYDCVLSGLLTDSSLIHSSEMLVEMARVMKPGGTLVLEEPVTGSEDTGVRTAEKLMSAIKLAGLVSVTEVKTEPLSPKAAAALTERTGFSGNTLSRVRMTASKPDFEVGSSTQLKLSFGKKKTTTVKPALDPGTAQKWTLSANDMDDDDVDLVDSDALLDADDLKKPDPSSLKASCGDDSKKKKKACKNCTCGLAEELEQESKAAQKASQPKSACGNCYLGDAFRCGSCPYLGMPAFKPGEKVLLANTDIADK</sequence>
<name>CPIN1_DANRE</name>
<evidence type="ECO:0000255" key="1">
    <source>
        <dbReference type="HAMAP-Rule" id="MF_03115"/>
    </source>
</evidence>
<evidence type="ECO:0000256" key="2">
    <source>
        <dbReference type="SAM" id="MobiDB-lite"/>
    </source>
</evidence>
<reference key="1">
    <citation type="journal article" date="2013" name="Nature">
        <title>The zebrafish reference genome sequence and its relationship to the human genome.</title>
        <authorList>
            <person name="Howe K."/>
            <person name="Clark M.D."/>
            <person name="Torroja C.F."/>
            <person name="Torrance J."/>
            <person name="Berthelot C."/>
            <person name="Muffato M."/>
            <person name="Collins J.E."/>
            <person name="Humphray S."/>
            <person name="McLaren K."/>
            <person name="Matthews L."/>
            <person name="McLaren S."/>
            <person name="Sealy I."/>
            <person name="Caccamo M."/>
            <person name="Churcher C."/>
            <person name="Scott C."/>
            <person name="Barrett J.C."/>
            <person name="Koch R."/>
            <person name="Rauch G.J."/>
            <person name="White S."/>
            <person name="Chow W."/>
            <person name="Kilian B."/>
            <person name="Quintais L.T."/>
            <person name="Guerra-Assuncao J.A."/>
            <person name="Zhou Y."/>
            <person name="Gu Y."/>
            <person name="Yen J."/>
            <person name="Vogel J.H."/>
            <person name="Eyre T."/>
            <person name="Redmond S."/>
            <person name="Banerjee R."/>
            <person name="Chi J."/>
            <person name="Fu B."/>
            <person name="Langley E."/>
            <person name="Maguire S.F."/>
            <person name="Laird G.K."/>
            <person name="Lloyd D."/>
            <person name="Kenyon E."/>
            <person name="Donaldson S."/>
            <person name="Sehra H."/>
            <person name="Almeida-King J."/>
            <person name="Loveland J."/>
            <person name="Trevanion S."/>
            <person name="Jones M."/>
            <person name="Quail M."/>
            <person name="Willey D."/>
            <person name="Hunt A."/>
            <person name="Burton J."/>
            <person name="Sims S."/>
            <person name="McLay K."/>
            <person name="Plumb B."/>
            <person name="Davis J."/>
            <person name="Clee C."/>
            <person name="Oliver K."/>
            <person name="Clark R."/>
            <person name="Riddle C."/>
            <person name="Elliot D."/>
            <person name="Threadgold G."/>
            <person name="Harden G."/>
            <person name="Ware D."/>
            <person name="Begum S."/>
            <person name="Mortimore B."/>
            <person name="Kerry G."/>
            <person name="Heath P."/>
            <person name="Phillimore B."/>
            <person name="Tracey A."/>
            <person name="Corby N."/>
            <person name="Dunn M."/>
            <person name="Johnson C."/>
            <person name="Wood J."/>
            <person name="Clark S."/>
            <person name="Pelan S."/>
            <person name="Griffiths G."/>
            <person name="Smith M."/>
            <person name="Glithero R."/>
            <person name="Howden P."/>
            <person name="Barker N."/>
            <person name="Lloyd C."/>
            <person name="Stevens C."/>
            <person name="Harley J."/>
            <person name="Holt K."/>
            <person name="Panagiotidis G."/>
            <person name="Lovell J."/>
            <person name="Beasley H."/>
            <person name="Henderson C."/>
            <person name="Gordon D."/>
            <person name="Auger K."/>
            <person name="Wright D."/>
            <person name="Collins J."/>
            <person name="Raisen C."/>
            <person name="Dyer L."/>
            <person name="Leung K."/>
            <person name="Robertson L."/>
            <person name="Ambridge K."/>
            <person name="Leongamornlert D."/>
            <person name="McGuire S."/>
            <person name="Gilderthorp R."/>
            <person name="Griffiths C."/>
            <person name="Manthravadi D."/>
            <person name="Nichol S."/>
            <person name="Barker G."/>
            <person name="Whitehead S."/>
            <person name="Kay M."/>
            <person name="Brown J."/>
            <person name="Murnane C."/>
            <person name="Gray E."/>
            <person name="Humphries M."/>
            <person name="Sycamore N."/>
            <person name="Barker D."/>
            <person name="Saunders D."/>
            <person name="Wallis J."/>
            <person name="Babbage A."/>
            <person name="Hammond S."/>
            <person name="Mashreghi-Mohammadi M."/>
            <person name="Barr L."/>
            <person name="Martin S."/>
            <person name="Wray P."/>
            <person name="Ellington A."/>
            <person name="Matthews N."/>
            <person name="Ellwood M."/>
            <person name="Woodmansey R."/>
            <person name="Clark G."/>
            <person name="Cooper J."/>
            <person name="Tromans A."/>
            <person name="Grafham D."/>
            <person name="Skuce C."/>
            <person name="Pandian R."/>
            <person name="Andrews R."/>
            <person name="Harrison E."/>
            <person name="Kimberley A."/>
            <person name="Garnett J."/>
            <person name="Fosker N."/>
            <person name="Hall R."/>
            <person name="Garner P."/>
            <person name="Kelly D."/>
            <person name="Bird C."/>
            <person name="Palmer S."/>
            <person name="Gehring I."/>
            <person name="Berger A."/>
            <person name="Dooley C.M."/>
            <person name="Ersan-Urun Z."/>
            <person name="Eser C."/>
            <person name="Geiger H."/>
            <person name="Geisler M."/>
            <person name="Karotki L."/>
            <person name="Kirn A."/>
            <person name="Konantz J."/>
            <person name="Konantz M."/>
            <person name="Oberlander M."/>
            <person name="Rudolph-Geiger S."/>
            <person name="Teucke M."/>
            <person name="Lanz C."/>
            <person name="Raddatz G."/>
            <person name="Osoegawa K."/>
            <person name="Zhu B."/>
            <person name="Rapp A."/>
            <person name="Widaa S."/>
            <person name="Langford C."/>
            <person name="Yang F."/>
            <person name="Schuster S.C."/>
            <person name="Carter N.P."/>
            <person name="Harrow J."/>
            <person name="Ning Z."/>
            <person name="Herrero J."/>
            <person name="Searle S.M."/>
            <person name="Enright A."/>
            <person name="Geisler R."/>
            <person name="Plasterk R.H."/>
            <person name="Lee C."/>
            <person name="Westerfield M."/>
            <person name="de Jong P.J."/>
            <person name="Zon L.I."/>
            <person name="Postlethwait J.H."/>
            <person name="Nusslein-Volhard C."/>
            <person name="Hubbard T.J."/>
            <person name="Roest Crollius H."/>
            <person name="Rogers J."/>
            <person name="Stemple D.L."/>
        </authorList>
    </citation>
    <scope>NUCLEOTIDE SEQUENCE [LARGE SCALE GENOMIC DNA]</scope>
    <source>
        <strain>Tuebingen</strain>
    </source>
</reference>
<reference key="2">
    <citation type="submission" date="2004-07" db="EMBL/GenBank/DDBJ databases">
        <authorList>
            <consortium name="NIH - Zebrafish Gene Collection (ZGC) project"/>
        </authorList>
    </citation>
    <scope>NUCLEOTIDE SEQUENCE [LARGE SCALE MRNA]</scope>
</reference>
<dbReference type="EMBL" id="AL929309">
    <property type="protein sequence ID" value="CAM14258.1"/>
    <property type="status" value="ALT_SEQ"/>
    <property type="molecule type" value="Genomic_DNA"/>
</dbReference>
<dbReference type="EMBL" id="BC078404">
    <property type="protein sequence ID" value="AAH78404.1"/>
    <property type="molecule type" value="mRNA"/>
</dbReference>
<dbReference type="RefSeq" id="NP_001003738.1">
    <property type="nucleotide sequence ID" value="NM_001003738.1"/>
</dbReference>
<dbReference type="RefSeq" id="XP_005174378.1">
    <property type="nucleotide sequence ID" value="XM_005174321.5"/>
</dbReference>
<dbReference type="RefSeq" id="XP_068073464.1">
    <property type="nucleotide sequence ID" value="XM_068217363.1"/>
</dbReference>
<dbReference type="RefSeq" id="XP_068073465.1">
    <property type="nucleotide sequence ID" value="XM_068217364.1"/>
</dbReference>
<dbReference type="SMR" id="Q6AZB3"/>
<dbReference type="FunCoup" id="Q6AZB3">
    <property type="interactions" value="2007"/>
</dbReference>
<dbReference type="STRING" id="7955.ENSDARP00000105419"/>
<dbReference type="PaxDb" id="7955-ENSDARP00000067234"/>
<dbReference type="Ensembl" id="ENSDART00000067235">
    <property type="protein sequence ID" value="ENSDARP00000067234"/>
    <property type="gene ID" value="ENSDARG00000045733"/>
</dbReference>
<dbReference type="Ensembl" id="ENSDART00000130548">
    <property type="protein sequence ID" value="ENSDARP00000105419"/>
    <property type="gene ID" value="ENSDARG00000045733"/>
</dbReference>
<dbReference type="GeneID" id="445283"/>
<dbReference type="KEGG" id="dre:445283"/>
<dbReference type="AGR" id="ZFIN:ZDB-GENE-040808-57"/>
<dbReference type="CTD" id="57019"/>
<dbReference type="ZFIN" id="ZDB-GENE-040808-57">
    <property type="gene designation" value="ciapin1"/>
</dbReference>
<dbReference type="eggNOG" id="KOG4020">
    <property type="taxonomic scope" value="Eukaryota"/>
</dbReference>
<dbReference type="InParanoid" id="Q6AZB3"/>
<dbReference type="OMA" id="PNVGDCE"/>
<dbReference type="OrthoDB" id="311633at2759"/>
<dbReference type="PhylomeDB" id="Q6AZB3"/>
<dbReference type="PRO" id="PR:Q6AZB3"/>
<dbReference type="Proteomes" id="UP000000437">
    <property type="component" value="Alternate scaffold 25"/>
</dbReference>
<dbReference type="Proteomes" id="UP000000437">
    <property type="component" value="Chromosome 25"/>
</dbReference>
<dbReference type="Bgee" id="ENSDARG00000045733">
    <property type="expression patterns" value="Expressed in spleen and 22 other cell types or tissues"/>
</dbReference>
<dbReference type="ExpressionAtlas" id="Q6AZB3">
    <property type="expression patterns" value="baseline and differential"/>
</dbReference>
<dbReference type="GO" id="GO:0005737">
    <property type="term" value="C:cytoplasm"/>
    <property type="evidence" value="ECO:0000318"/>
    <property type="project" value="GO_Central"/>
</dbReference>
<dbReference type="GO" id="GO:0005758">
    <property type="term" value="C:mitochondrial intermembrane space"/>
    <property type="evidence" value="ECO:0007669"/>
    <property type="project" value="UniProtKB-SubCell"/>
</dbReference>
<dbReference type="GO" id="GO:0005634">
    <property type="term" value="C:nucleus"/>
    <property type="evidence" value="ECO:0007669"/>
    <property type="project" value="UniProtKB-SubCell"/>
</dbReference>
<dbReference type="GO" id="GO:0051537">
    <property type="term" value="F:2 iron, 2 sulfur cluster binding"/>
    <property type="evidence" value="ECO:0000250"/>
    <property type="project" value="UniProtKB"/>
</dbReference>
<dbReference type="GO" id="GO:0051539">
    <property type="term" value="F:4 iron, 4 sulfur cluster binding"/>
    <property type="evidence" value="ECO:0007669"/>
    <property type="project" value="UniProtKB-KW"/>
</dbReference>
<dbReference type="GO" id="GO:0009055">
    <property type="term" value="F:electron transfer activity"/>
    <property type="evidence" value="ECO:0007669"/>
    <property type="project" value="UniProtKB-UniRule"/>
</dbReference>
<dbReference type="GO" id="GO:0046872">
    <property type="term" value="F:metal ion binding"/>
    <property type="evidence" value="ECO:0007669"/>
    <property type="project" value="UniProtKB-KW"/>
</dbReference>
<dbReference type="GO" id="GO:0006915">
    <property type="term" value="P:apoptotic process"/>
    <property type="evidence" value="ECO:0007669"/>
    <property type="project" value="UniProtKB-KW"/>
</dbReference>
<dbReference type="GO" id="GO:0030097">
    <property type="term" value="P:hemopoiesis"/>
    <property type="evidence" value="ECO:0007669"/>
    <property type="project" value="UniProtKB-UniRule"/>
</dbReference>
<dbReference type="GO" id="GO:0016226">
    <property type="term" value="P:iron-sulfur cluster assembly"/>
    <property type="evidence" value="ECO:0000318"/>
    <property type="project" value="GO_Central"/>
</dbReference>
<dbReference type="GO" id="GO:0043066">
    <property type="term" value="P:negative regulation of apoptotic process"/>
    <property type="evidence" value="ECO:0007669"/>
    <property type="project" value="UniProtKB-UniRule"/>
</dbReference>
<dbReference type="FunFam" id="3.40.50.150:FF:000085">
    <property type="entry name" value="Anamorsin homolog"/>
    <property type="match status" value="1"/>
</dbReference>
<dbReference type="Gene3D" id="3.40.50.150">
    <property type="entry name" value="Vaccinia Virus protein VP39"/>
    <property type="match status" value="1"/>
</dbReference>
<dbReference type="HAMAP" id="MF_03115">
    <property type="entry name" value="Anamorsin"/>
    <property type="match status" value="1"/>
</dbReference>
<dbReference type="InterPro" id="IPR007785">
    <property type="entry name" value="Anamorsin"/>
</dbReference>
<dbReference type="InterPro" id="IPR049011">
    <property type="entry name" value="Anamorsin_N_metazoan"/>
</dbReference>
<dbReference type="InterPro" id="IPR046408">
    <property type="entry name" value="CIAPIN1"/>
</dbReference>
<dbReference type="InterPro" id="IPR029063">
    <property type="entry name" value="SAM-dependent_MTases_sf"/>
</dbReference>
<dbReference type="PANTHER" id="PTHR13273">
    <property type="entry name" value="ANAMORSIN"/>
    <property type="match status" value="1"/>
</dbReference>
<dbReference type="PANTHER" id="PTHR13273:SF14">
    <property type="entry name" value="ANAMORSIN"/>
    <property type="match status" value="1"/>
</dbReference>
<dbReference type="Pfam" id="PF20922">
    <property type="entry name" value="Anamorsin_N"/>
    <property type="match status" value="1"/>
</dbReference>
<dbReference type="Pfam" id="PF05093">
    <property type="entry name" value="CIAPIN1"/>
    <property type="match status" value="2"/>
</dbReference>
<dbReference type="SUPFAM" id="SSF53335">
    <property type="entry name" value="S-adenosyl-L-methionine-dependent methyltransferases"/>
    <property type="match status" value="1"/>
</dbReference>
<organism>
    <name type="scientific">Danio rerio</name>
    <name type="common">Zebrafish</name>
    <name type="synonym">Brachydanio rerio</name>
    <dbReference type="NCBI Taxonomy" id="7955"/>
    <lineage>
        <taxon>Eukaryota</taxon>
        <taxon>Metazoa</taxon>
        <taxon>Chordata</taxon>
        <taxon>Craniata</taxon>
        <taxon>Vertebrata</taxon>
        <taxon>Euteleostomi</taxon>
        <taxon>Actinopterygii</taxon>
        <taxon>Neopterygii</taxon>
        <taxon>Teleostei</taxon>
        <taxon>Ostariophysi</taxon>
        <taxon>Cypriniformes</taxon>
        <taxon>Danionidae</taxon>
        <taxon>Danioninae</taxon>
        <taxon>Danio</taxon>
    </lineage>
</organism>
<feature type="chain" id="PRO_0000392302" description="Anamorsin">
    <location>
        <begin position="1"/>
        <end position="311"/>
    </location>
</feature>
<feature type="region of interest" description="N-terminal SAM-like domain" evidence="1">
    <location>
        <begin position="6"/>
        <end position="170"/>
    </location>
</feature>
<feature type="region of interest" description="Linker" evidence="1">
    <location>
        <begin position="171"/>
        <end position="222"/>
    </location>
</feature>
<feature type="region of interest" description="Disordered" evidence="2">
    <location>
        <begin position="219"/>
        <end position="241"/>
    </location>
</feature>
<feature type="region of interest" description="Fe-S binding site A" evidence="1">
    <location>
        <begin position="234"/>
        <end position="250"/>
    </location>
</feature>
<feature type="region of interest" description="Fe-S binding site B" evidence="1">
    <location>
        <begin position="273"/>
        <end position="287"/>
    </location>
</feature>
<feature type="short sequence motif" description="Cx2C motif 1" evidence="1">
    <location>
        <begin position="273"/>
        <end position="276"/>
    </location>
</feature>
<feature type="short sequence motif" description="Cx2C motif 2" evidence="1">
    <location>
        <begin position="284"/>
        <end position="287"/>
    </location>
</feature>
<feature type="binding site" evidence="1">
    <location>
        <position position="234"/>
    </location>
    <ligand>
        <name>[2Fe-2S] cluster</name>
        <dbReference type="ChEBI" id="CHEBI:190135"/>
    </ligand>
</feature>
<feature type="binding site" evidence="1">
    <location>
        <position position="245"/>
    </location>
    <ligand>
        <name>[2Fe-2S] cluster</name>
        <dbReference type="ChEBI" id="CHEBI:190135"/>
    </ligand>
</feature>
<feature type="binding site" evidence="1">
    <location>
        <position position="248"/>
    </location>
    <ligand>
        <name>[2Fe-2S] cluster</name>
        <dbReference type="ChEBI" id="CHEBI:190135"/>
    </ligand>
</feature>
<feature type="binding site" evidence="1">
    <location>
        <position position="250"/>
    </location>
    <ligand>
        <name>[2Fe-2S] cluster</name>
        <dbReference type="ChEBI" id="CHEBI:190135"/>
    </ligand>
</feature>
<feature type="binding site" evidence="1">
    <location>
        <position position="273"/>
    </location>
    <ligand>
        <name>[4Fe-4S] cluster</name>
        <dbReference type="ChEBI" id="CHEBI:49883"/>
    </ligand>
</feature>
<feature type="binding site" evidence="1">
    <location>
        <position position="276"/>
    </location>
    <ligand>
        <name>[4Fe-4S] cluster</name>
        <dbReference type="ChEBI" id="CHEBI:49883"/>
    </ligand>
</feature>
<feature type="binding site" evidence="1">
    <location>
        <position position="284"/>
    </location>
    <ligand>
        <name>[4Fe-4S] cluster</name>
        <dbReference type="ChEBI" id="CHEBI:49883"/>
    </ligand>
</feature>
<feature type="binding site" evidence="1">
    <location>
        <position position="287"/>
    </location>
    <ligand>
        <name>[4Fe-4S] cluster</name>
        <dbReference type="ChEBI" id="CHEBI:49883"/>
    </ligand>
</feature>
<accession>Q6AZB3</accession>
<accession>A2AV35</accession>
<proteinExistence type="evidence at transcript level"/>